<organism>
    <name type="scientific">Staphylococcus aureus (strain JH1)</name>
    <dbReference type="NCBI Taxonomy" id="359787"/>
    <lineage>
        <taxon>Bacteria</taxon>
        <taxon>Bacillati</taxon>
        <taxon>Bacillota</taxon>
        <taxon>Bacilli</taxon>
        <taxon>Bacillales</taxon>
        <taxon>Staphylococcaceae</taxon>
        <taxon>Staphylococcus</taxon>
    </lineage>
</organism>
<dbReference type="EMBL" id="CP000736">
    <property type="protein sequence ID" value="ABR52161.1"/>
    <property type="molecule type" value="Genomic_DNA"/>
</dbReference>
<dbReference type="SMR" id="A6U143"/>
<dbReference type="KEGG" id="sah:SaurJH1_1308"/>
<dbReference type="HOGENOM" id="CLU_064548_7_1_9"/>
<dbReference type="GO" id="GO:1990904">
    <property type="term" value="C:ribonucleoprotein complex"/>
    <property type="evidence" value="ECO:0007669"/>
    <property type="project" value="UniProtKB-KW"/>
</dbReference>
<dbReference type="GO" id="GO:0005840">
    <property type="term" value="C:ribosome"/>
    <property type="evidence" value="ECO:0007669"/>
    <property type="project" value="UniProtKB-KW"/>
</dbReference>
<dbReference type="GO" id="GO:0003735">
    <property type="term" value="F:structural constituent of ribosome"/>
    <property type="evidence" value="ECO:0007669"/>
    <property type="project" value="InterPro"/>
</dbReference>
<dbReference type="GO" id="GO:0006412">
    <property type="term" value="P:translation"/>
    <property type="evidence" value="ECO:0007669"/>
    <property type="project" value="UniProtKB-UniRule"/>
</dbReference>
<dbReference type="Gene3D" id="2.30.170.40">
    <property type="entry name" value="Ribosomal protein L28/L24"/>
    <property type="match status" value="1"/>
</dbReference>
<dbReference type="HAMAP" id="MF_00373">
    <property type="entry name" value="Ribosomal_bL28"/>
    <property type="match status" value="1"/>
</dbReference>
<dbReference type="InterPro" id="IPR050096">
    <property type="entry name" value="Bacterial_rp_bL28"/>
</dbReference>
<dbReference type="InterPro" id="IPR026569">
    <property type="entry name" value="Ribosomal_bL28"/>
</dbReference>
<dbReference type="InterPro" id="IPR034704">
    <property type="entry name" value="Ribosomal_bL28/bL31-like_sf"/>
</dbReference>
<dbReference type="InterPro" id="IPR001383">
    <property type="entry name" value="Ribosomal_bL28_bact-type"/>
</dbReference>
<dbReference type="InterPro" id="IPR037147">
    <property type="entry name" value="Ribosomal_bL28_sf"/>
</dbReference>
<dbReference type="NCBIfam" id="TIGR00009">
    <property type="entry name" value="L28"/>
    <property type="match status" value="1"/>
</dbReference>
<dbReference type="PANTHER" id="PTHR39080">
    <property type="entry name" value="50S RIBOSOMAL PROTEIN L28"/>
    <property type="match status" value="1"/>
</dbReference>
<dbReference type="PANTHER" id="PTHR39080:SF1">
    <property type="entry name" value="LARGE RIBOSOMAL SUBUNIT PROTEIN BL28A"/>
    <property type="match status" value="1"/>
</dbReference>
<dbReference type="Pfam" id="PF00830">
    <property type="entry name" value="Ribosomal_L28"/>
    <property type="match status" value="1"/>
</dbReference>
<dbReference type="SUPFAM" id="SSF143800">
    <property type="entry name" value="L28p-like"/>
    <property type="match status" value="1"/>
</dbReference>
<sequence>MGKQCFVTGRKASTGNRRSHALNSTKRRWNANLQKVRILVDGKPKKVWVSARALKSGKVTRV</sequence>
<feature type="chain" id="PRO_1000079866" description="Large ribosomal subunit protein bL28">
    <location>
        <begin position="1"/>
        <end position="62"/>
    </location>
</feature>
<feature type="region of interest" description="Disordered" evidence="2">
    <location>
        <begin position="1"/>
        <end position="22"/>
    </location>
</feature>
<gene>
    <name evidence="1" type="primary">rpmB</name>
    <name type="ordered locus">SaurJH1_1308</name>
</gene>
<keyword id="KW-0687">Ribonucleoprotein</keyword>
<keyword id="KW-0689">Ribosomal protein</keyword>
<evidence type="ECO:0000255" key="1">
    <source>
        <dbReference type="HAMAP-Rule" id="MF_00373"/>
    </source>
</evidence>
<evidence type="ECO:0000256" key="2">
    <source>
        <dbReference type="SAM" id="MobiDB-lite"/>
    </source>
</evidence>
<evidence type="ECO:0000305" key="3"/>
<proteinExistence type="inferred from homology"/>
<comment type="similarity">
    <text evidence="1">Belongs to the bacterial ribosomal protein bL28 family.</text>
</comment>
<accession>A6U143</accession>
<reference key="1">
    <citation type="submission" date="2007-06" db="EMBL/GenBank/DDBJ databases">
        <title>Complete sequence of chromosome of Staphylococcus aureus subsp. aureus JH1.</title>
        <authorList>
            <consortium name="US DOE Joint Genome Institute"/>
            <person name="Copeland A."/>
            <person name="Lucas S."/>
            <person name="Lapidus A."/>
            <person name="Barry K."/>
            <person name="Detter J.C."/>
            <person name="Glavina del Rio T."/>
            <person name="Hammon N."/>
            <person name="Israni S."/>
            <person name="Dalin E."/>
            <person name="Tice H."/>
            <person name="Pitluck S."/>
            <person name="Chain P."/>
            <person name="Malfatti S."/>
            <person name="Shin M."/>
            <person name="Vergez L."/>
            <person name="Schmutz J."/>
            <person name="Larimer F."/>
            <person name="Land M."/>
            <person name="Hauser L."/>
            <person name="Kyrpides N."/>
            <person name="Ivanova N."/>
            <person name="Tomasz A."/>
            <person name="Richardson P."/>
        </authorList>
    </citation>
    <scope>NUCLEOTIDE SEQUENCE [LARGE SCALE GENOMIC DNA]</scope>
    <source>
        <strain>JH1</strain>
    </source>
</reference>
<name>RL28_STAA2</name>
<protein>
    <recommendedName>
        <fullName evidence="1">Large ribosomal subunit protein bL28</fullName>
    </recommendedName>
    <alternativeName>
        <fullName evidence="3">50S ribosomal protein L28</fullName>
    </alternativeName>
</protein>